<proteinExistence type="inferred from homology"/>
<name>RS2_THEPD</name>
<accession>A1RWV4</accession>
<reference key="1">
    <citation type="journal article" date="2008" name="J. Bacteriol.">
        <title>Genome sequence of Thermofilum pendens reveals an exceptional loss of biosynthetic pathways without genome reduction.</title>
        <authorList>
            <person name="Anderson I."/>
            <person name="Rodriguez J."/>
            <person name="Susanti D."/>
            <person name="Porat I."/>
            <person name="Reich C."/>
            <person name="Ulrich L.E."/>
            <person name="Elkins J.G."/>
            <person name="Mavromatis K."/>
            <person name="Lykidis A."/>
            <person name="Kim E."/>
            <person name="Thompson L.S."/>
            <person name="Nolan M."/>
            <person name="Land M."/>
            <person name="Copeland A."/>
            <person name="Lapidus A."/>
            <person name="Lucas S."/>
            <person name="Detter C."/>
            <person name="Zhulin I.B."/>
            <person name="Olsen G.J."/>
            <person name="Whitman W."/>
            <person name="Mukhopadhyay B."/>
            <person name="Bristow J."/>
            <person name="Kyrpides N."/>
        </authorList>
    </citation>
    <scope>NUCLEOTIDE SEQUENCE [LARGE SCALE GENOMIC DNA]</scope>
    <source>
        <strain>DSM 2475 / Hrk 5</strain>
    </source>
</reference>
<organism>
    <name type="scientific">Thermofilum pendens (strain DSM 2475 / Hrk 5)</name>
    <dbReference type="NCBI Taxonomy" id="368408"/>
    <lineage>
        <taxon>Archaea</taxon>
        <taxon>Thermoproteota</taxon>
        <taxon>Thermoprotei</taxon>
        <taxon>Thermofilales</taxon>
        <taxon>Thermofilaceae</taxon>
        <taxon>Thermofilum</taxon>
    </lineage>
</organism>
<evidence type="ECO:0000255" key="1">
    <source>
        <dbReference type="HAMAP-Rule" id="MF_00291"/>
    </source>
</evidence>
<evidence type="ECO:0000305" key="2"/>
<dbReference type="EMBL" id="CP000505">
    <property type="protein sequence ID" value="ABL77684.1"/>
    <property type="molecule type" value="Genomic_DNA"/>
</dbReference>
<dbReference type="RefSeq" id="WP_011751949.1">
    <property type="nucleotide sequence ID" value="NC_008698.1"/>
</dbReference>
<dbReference type="SMR" id="A1RWV4"/>
<dbReference type="STRING" id="368408.Tpen_0274"/>
<dbReference type="EnsemblBacteria" id="ABL77684">
    <property type="protein sequence ID" value="ABL77684"/>
    <property type="gene ID" value="Tpen_0274"/>
</dbReference>
<dbReference type="GeneID" id="4601895"/>
<dbReference type="KEGG" id="tpe:Tpen_0274"/>
<dbReference type="eggNOG" id="arCOG04245">
    <property type="taxonomic scope" value="Archaea"/>
</dbReference>
<dbReference type="HOGENOM" id="CLU_058171_3_0_2"/>
<dbReference type="OrthoDB" id="371797at2157"/>
<dbReference type="Proteomes" id="UP000000641">
    <property type="component" value="Chromosome"/>
</dbReference>
<dbReference type="GO" id="GO:0015935">
    <property type="term" value="C:small ribosomal subunit"/>
    <property type="evidence" value="ECO:0007669"/>
    <property type="project" value="InterPro"/>
</dbReference>
<dbReference type="GO" id="GO:0003735">
    <property type="term" value="F:structural constituent of ribosome"/>
    <property type="evidence" value="ECO:0007669"/>
    <property type="project" value="InterPro"/>
</dbReference>
<dbReference type="GO" id="GO:0006412">
    <property type="term" value="P:translation"/>
    <property type="evidence" value="ECO:0007669"/>
    <property type="project" value="UniProtKB-UniRule"/>
</dbReference>
<dbReference type="CDD" id="cd01425">
    <property type="entry name" value="RPS2"/>
    <property type="match status" value="1"/>
</dbReference>
<dbReference type="FunFam" id="3.40.50.10490:FF:000030">
    <property type="entry name" value="30S ribosomal protein S2"/>
    <property type="match status" value="1"/>
</dbReference>
<dbReference type="Gene3D" id="3.40.50.10490">
    <property type="entry name" value="Glucose-6-phosphate isomerase like protein, domain 1"/>
    <property type="match status" value="1"/>
</dbReference>
<dbReference type="HAMAP" id="MF_00291_A">
    <property type="entry name" value="Ribosomal_uS2_A"/>
    <property type="match status" value="1"/>
</dbReference>
<dbReference type="InterPro" id="IPR001865">
    <property type="entry name" value="Ribosomal_uS2"/>
</dbReference>
<dbReference type="InterPro" id="IPR023454">
    <property type="entry name" value="Ribosomal_uS2_arc"/>
</dbReference>
<dbReference type="InterPro" id="IPR005707">
    <property type="entry name" value="Ribosomal_uS2_euk/arc"/>
</dbReference>
<dbReference type="InterPro" id="IPR023591">
    <property type="entry name" value="Ribosomal_uS2_flav_dom_sf"/>
</dbReference>
<dbReference type="NCBIfam" id="TIGR01012">
    <property type="entry name" value="uS2_euk_arch"/>
    <property type="match status" value="1"/>
</dbReference>
<dbReference type="PANTHER" id="PTHR11489">
    <property type="entry name" value="40S RIBOSOMAL PROTEIN SA"/>
    <property type="match status" value="1"/>
</dbReference>
<dbReference type="Pfam" id="PF00318">
    <property type="entry name" value="Ribosomal_S2"/>
    <property type="match status" value="1"/>
</dbReference>
<dbReference type="PRINTS" id="PR00395">
    <property type="entry name" value="RIBOSOMALS2"/>
</dbReference>
<dbReference type="SUPFAM" id="SSF52313">
    <property type="entry name" value="Ribosomal protein S2"/>
    <property type="match status" value="1"/>
</dbReference>
<feature type="chain" id="PRO_0000352081" description="Small ribosomal subunit protein uS2">
    <location>
        <begin position="1"/>
        <end position="214"/>
    </location>
</feature>
<sequence length="214" mass="23738">MSLDELKLLEGQLLIPLEMYLAAGIRIGTKMKSKFMEPFIYSARPDGLYLLDVKKTDERIRIAAKMIARYDPSKFVVVSGRQYGHRPVRKFCGLVGCKPMLGRVLPGTFTNPALSHFTEADLMMVTDPRVDEQAVVEAGTMGIPVIALCDTDSPISNVDLIIPTNNRGRKALALIFWLLAREVLRIRGDIPPNGELPVPLSDFEARILTTGEVV</sequence>
<gene>
    <name evidence="1" type="primary">rps2</name>
    <name type="ordered locus">Tpen_0274</name>
</gene>
<comment type="similarity">
    <text evidence="1">Belongs to the universal ribosomal protein uS2 family.</text>
</comment>
<protein>
    <recommendedName>
        <fullName evidence="1">Small ribosomal subunit protein uS2</fullName>
    </recommendedName>
    <alternativeName>
        <fullName evidence="2">30S ribosomal protein S2</fullName>
    </alternativeName>
</protein>
<keyword id="KW-1185">Reference proteome</keyword>
<keyword id="KW-0687">Ribonucleoprotein</keyword>
<keyword id="KW-0689">Ribosomal protein</keyword>